<keyword id="KW-0963">Cytoplasm</keyword>
<keyword id="KW-0378">Hydrolase</keyword>
<keyword id="KW-0694">RNA-binding</keyword>
<keyword id="KW-0820">tRNA-binding</keyword>
<sequence>MRVVLQRSKEASVTVDGEIVGQIPFGLTLLVGITHEDTEKDATYIAEKIANLRIFEDESGKMNHSVLDVEGQVLSISQFTLYGDCRKGRRPNFMDAAKPDYAERLYDFFNEEVRKQGLHVETGKFGAMMDVSLINDGPVTLIVESK</sequence>
<protein>
    <recommendedName>
        <fullName evidence="1">D-aminoacyl-tRNA deacylase</fullName>
        <shortName evidence="1">DTD</shortName>
        <ecNumber evidence="1">3.1.1.96</ecNumber>
    </recommendedName>
    <alternativeName>
        <fullName evidence="1">Gly-tRNA(Ala) deacylase</fullName>
    </alternativeName>
</protein>
<proteinExistence type="inferred from homology"/>
<comment type="function">
    <text evidence="1">An aminoacyl-tRNA editing enzyme that deacylates mischarged D-aminoacyl-tRNAs. Also deacylates mischarged glycyl-tRNA(Ala), protecting cells against glycine mischarging by AlaRS. Acts via tRNA-based rather than protein-based catalysis; rejects L-amino acids rather than detecting D-amino acids in the active site. By recycling D-aminoacyl-tRNA to D-amino acids and free tRNA molecules, this enzyme counteracts the toxicity associated with the formation of D-aminoacyl-tRNA entities in vivo and helps enforce protein L-homochirality.</text>
</comment>
<comment type="catalytic activity">
    <reaction evidence="1">
        <text>glycyl-tRNA(Ala) + H2O = tRNA(Ala) + glycine + H(+)</text>
        <dbReference type="Rhea" id="RHEA:53744"/>
        <dbReference type="Rhea" id="RHEA-COMP:9657"/>
        <dbReference type="Rhea" id="RHEA-COMP:13640"/>
        <dbReference type="ChEBI" id="CHEBI:15377"/>
        <dbReference type="ChEBI" id="CHEBI:15378"/>
        <dbReference type="ChEBI" id="CHEBI:57305"/>
        <dbReference type="ChEBI" id="CHEBI:78442"/>
        <dbReference type="ChEBI" id="CHEBI:78522"/>
        <dbReference type="EC" id="3.1.1.96"/>
    </reaction>
</comment>
<comment type="catalytic activity">
    <reaction evidence="1">
        <text>a D-aminoacyl-tRNA + H2O = a tRNA + a D-alpha-amino acid + H(+)</text>
        <dbReference type="Rhea" id="RHEA:13953"/>
        <dbReference type="Rhea" id="RHEA-COMP:10123"/>
        <dbReference type="Rhea" id="RHEA-COMP:10124"/>
        <dbReference type="ChEBI" id="CHEBI:15377"/>
        <dbReference type="ChEBI" id="CHEBI:15378"/>
        <dbReference type="ChEBI" id="CHEBI:59871"/>
        <dbReference type="ChEBI" id="CHEBI:78442"/>
        <dbReference type="ChEBI" id="CHEBI:79333"/>
        <dbReference type="EC" id="3.1.1.96"/>
    </reaction>
</comment>
<comment type="subunit">
    <text evidence="1">Homodimer.</text>
</comment>
<comment type="subcellular location">
    <subcellularLocation>
        <location evidence="1">Cytoplasm</location>
    </subcellularLocation>
</comment>
<comment type="domain">
    <text evidence="1">A Gly-cisPro motif from one monomer fits into the active site of the other monomer to allow specific chiral rejection of L-amino acids.</text>
</comment>
<comment type="similarity">
    <text evidence="1">Belongs to the DTD family.</text>
</comment>
<gene>
    <name evidence="1" type="primary">dtd</name>
    <name type="ordered locus">BCAH187_A4540</name>
</gene>
<feature type="chain" id="PRO_1000127494" description="D-aminoacyl-tRNA deacylase">
    <location>
        <begin position="1"/>
        <end position="146"/>
    </location>
</feature>
<feature type="short sequence motif" description="Gly-cisPro motif, important for rejection of L-amino acids" evidence="1">
    <location>
        <begin position="137"/>
        <end position="138"/>
    </location>
</feature>
<name>DTD_BACC7</name>
<evidence type="ECO:0000255" key="1">
    <source>
        <dbReference type="HAMAP-Rule" id="MF_00518"/>
    </source>
</evidence>
<dbReference type="EC" id="3.1.1.96" evidence="1"/>
<dbReference type="EMBL" id="CP001177">
    <property type="protein sequence ID" value="ACJ81251.1"/>
    <property type="molecule type" value="Genomic_DNA"/>
</dbReference>
<dbReference type="SMR" id="B7HQG5"/>
<dbReference type="KEGG" id="bcr:BCAH187_A4540"/>
<dbReference type="HOGENOM" id="CLU_076901_1_0_9"/>
<dbReference type="Proteomes" id="UP000002214">
    <property type="component" value="Chromosome"/>
</dbReference>
<dbReference type="GO" id="GO:0005737">
    <property type="term" value="C:cytoplasm"/>
    <property type="evidence" value="ECO:0007669"/>
    <property type="project" value="UniProtKB-SubCell"/>
</dbReference>
<dbReference type="GO" id="GO:0051500">
    <property type="term" value="F:D-tyrosyl-tRNA(Tyr) deacylase activity"/>
    <property type="evidence" value="ECO:0007669"/>
    <property type="project" value="TreeGrafter"/>
</dbReference>
<dbReference type="GO" id="GO:0106026">
    <property type="term" value="F:Gly-tRNA(Ala) deacylase activity"/>
    <property type="evidence" value="ECO:0007669"/>
    <property type="project" value="UniProtKB-UniRule"/>
</dbReference>
<dbReference type="GO" id="GO:0043908">
    <property type="term" value="F:Ser(Gly)-tRNA(Ala) hydrolase activity"/>
    <property type="evidence" value="ECO:0007669"/>
    <property type="project" value="UniProtKB-UniRule"/>
</dbReference>
<dbReference type="GO" id="GO:0000049">
    <property type="term" value="F:tRNA binding"/>
    <property type="evidence" value="ECO:0007669"/>
    <property type="project" value="UniProtKB-UniRule"/>
</dbReference>
<dbReference type="GO" id="GO:0019478">
    <property type="term" value="P:D-amino acid catabolic process"/>
    <property type="evidence" value="ECO:0007669"/>
    <property type="project" value="UniProtKB-UniRule"/>
</dbReference>
<dbReference type="CDD" id="cd00563">
    <property type="entry name" value="Dtyr_deacylase"/>
    <property type="match status" value="1"/>
</dbReference>
<dbReference type="FunFam" id="3.50.80.10:FF:000001">
    <property type="entry name" value="D-aminoacyl-tRNA deacylase"/>
    <property type="match status" value="1"/>
</dbReference>
<dbReference type="Gene3D" id="3.50.80.10">
    <property type="entry name" value="D-tyrosyl-tRNA(Tyr) deacylase"/>
    <property type="match status" value="1"/>
</dbReference>
<dbReference type="HAMAP" id="MF_00518">
    <property type="entry name" value="Deacylase_Dtd"/>
    <property type="match status" value="1"/>
</dbReference>
<dbReference type="InterPro" id="IPR003732">
    <property type="entry name" value="Daa-tRNA_deacyls_DTD"/>
</dbReference>
<dbReference type="InterPro" id="IPR023509">
    <property type="entry name" value="DTD-like_sf"/>
</dbReference>
<dbReference type="NCBIfam" id="TIGR00256">
    <property type="entry name" value="D-aminoacyl-tRNA deacylase"/>
    <property type="match status" value="1"/>
</dbReference>
<dbReference type="PANTHER" id="PTHR10472:SF5">
    <property type="entry name" value="D-AMINOACYL-TRNA DEACYLASE 1"/>
    <property type="match status" value="1"/>
</dbReference>
<dbReference type="PANTHER" id="PTHR10472">
    <property type="entry name" value="D-TYROSYL-TRNA TYR DEACYLASE"/>
    <property type="match status" value="1"/>
</dbReference>
<dbReference type="Pfam" id="PF02580">
    <property type="entry name" value="Tyr_Deacylase"/>
    <property type="match status" value="1"/>
</dbReference>
<dbReference type="SUPFAM" id="SSF69500">
    <property type="entry name" value="DTD-like"/>
    <property type="match status" value="1"/>
</dbReference>
<accession>B7HQG5</accession>
<reference key="1">
    <citation type="submission" date="2008-10" db="EMBL/GenBank/DDBJ databases">
        <title>Genome sequence of Bacillus cereus AH187.</title>
        <authorList>
            <person name="Dodson R.J."/>
            <person name="Durkin A.S."/>
            <person name="Rosovitz M.J."/>
            <person name="Rasko D.A."/>
            <person name="Kolsto A.B."/>
            <person name="Okstad O.A."/>
            <person name="Ravel J."/>
            <person name="Sutton G."/>
        </authorList>
    </citation>
    <scope>NUCLEOTIDE SEQUENCE [LARGE SCALE GENOMIC DNA]</scope>
    <source>
        <strain>AH187</strain>
    </source>
</reference>
<organism>
    <name type="scientific">Bacillus cereus (strain AH187)</name>
    <dbReference type="NCBI Taxonomy" id="405534"/>
    <lineage>
        <taxon>Bacteria</taxon>
        <taxon>Bacillati</taxon>
        <taxon>Bacillota</taxon>
        <taxon>Bacilli</taxon>
        <taxon>Bacillales</taxon>
        <taxon>Bacillaceae</taxon>
        <taxon>Bacillus</taxon>
        <taxon>Bacillus cereus group</taxon>
    </lineage>
</organism>